<reference key="1">
    <citation type="journal article" date="2008" name="J. Bacteriol.">
        <title>Genome sequence of Staphylococcus aureus strain Newman and comparative analysis of staphylococcal genomes: polymorphism and evolution of two major pathogenicity islands.</title>
        <authorList>
            <person name="Baba T."/>
            <person name="Bae T."/>
            <person name="Schneewind O."/>
            <person name="Takeuchi F."/>
            <person name="Hiramatsu K."/>
        </authorList>
    </citation>
    <scope>NUCLEOTIDE SEQUENCE [LARGE SCALE GENOMIC DNA]</scope>
    <source>
        <strain>Newman</strain>
    </source>
</reference>
<sequence>MIESNMLVLTLVIPVITAILLVFIGKRPIIKRYVALGGTLLTLVAAIINLANVVKHGPIRVELGSWKAPYSIVFVLDIFSALLIITSIIITAIVILYSYQTIGIERERYYYYFSVLFMLIGIIGAFTTGDIFNLFVFFEVFLMSSYFLLVIGSTKIQLQETIKYVLVNVVSSSFFVMGVAILYSVVGTLNLADISNKLANLSAHDSGLVNIVFILFIFVFATKAGVFPMFVWLPSAYYAPPIPIIAFFGALLTKVGVYAIARTLSLFFSDNVSFSHYVILFLALLTIIFGCVGAVAYANIKKIILYNVMIAVGVILVGVAMMTESGMIGAIYYTLHDMLVKLALFLLIGIMIKITGTADLRQFGGLIKRYPVLGWSFFIAALSLAGIPPLSGFYGKFFIVQSTFERGFYLSGVIVLLSSLVVLYSVIRIFLQGFFGQPKGYDLNNKVDVKYLTTIAIVAVVITVLYGLSADYLYPMVKAGAETFYNPSTYVKAVLGGK</sequence>
<organism>
    <name type="scientific">Staphylococcus aureus (strain Newman)</name>
    <dbReference type="NCBI Taxonomy" id="426430"/>
    <lineage>
        <taxon>Bacteria</taxon>
        <taxon>Bacillati</taxon>
        <taxon>Bacillota</taxon>
        <taxon>Bacilli</taxon>
        <taxon>Bacillales</taxon>
        <taxon>Staphylococcaceae</taxon>
        <taxon>Staphylococcus</taxon>
    </lineage>
</organism>
<accession>A6QFF9</accession>
<gene>
    <name type="primary">mnhD1</name>
    <name type="ordered locus">NWMN_0819</name>
</gene>
<evidence type="ECO:0000250" key="1"/>
<evidence type="ECO:0000255" key="2"/>
<evidence type="ECO:0000305" key="3"/>
<keyword id="KW-0050">Antiport</keyword>
<keyword id="KW-1003">Cell membrane</keyword>
<keyword id="KW-0375">Hydrogen ion transport</keyword>
<keyword id="KW-0406">Ion transport</keyword>
<keyword id="KW-0472">Membrane</keyword>
<keyword id="KW-0915">Sodium</keyword>
<keyword id="KW-0739">Sodium transport</keyword>
<keyword id="KW-0812">Transmembrane</keyword>
<keyword id="KW-1133">Transmembrane helix</keyword>
<keyword id="KW-0813">Transport</keyword>
<feature type="chain" id="PRO_0000372134" description="Na(+)/H(+) antiporter subunit D1">
    <location>
        <begin position="1"/>
        <end position="498"/>
    </location>
</feature>
<feature type="transmembrane region" description="Helical" evidence="2">
    <location>
        <begin position="5"/>
        <end position="25"/>
    </location>
</feature>
<feature type="transmembrane region" description="Helical" evidence="2">
    <location>
        <begin position="34"/>
        <end position="54"/>
    </location>
</feature>
<feature type="transmembrane region" description="Helical" evidence="2">
    <location>
        <begin position="75"/>
        <end position="95"/>
    </location>
</feature>
<feature type="transmembrane region" description="Helical" evidence="2">
    <location>
        <begin position="109"/>
        <end position="129"/>
    </location>
</feature>
<feature type="transmembrane region" description="Helical" evidence="2">
    <location>
        <begin position="131"/>
        <end position="151"/>
    </location>
</feature>
<feature type="transmembrane region" description="Helical" evidence="2">
    <location>
        <begin position="169"/>
        <end position="189"/>
    </location>
</feature>
<feature type="transmembrane region" description="Helical" evidence="2">
    <location>
        <begin position="211"/>
        <end position="231"/>
    </location>
</feature>
<feature type="transmembrane region" description="Helical" evidence="2">
    <location>
        <begin position="241"/>
        <end position="261"/>
    </location>
</feature>
<feature type="transmembrane region" description="Helical" evidence="2">
    <location>
        <begin position="278"/>
        <end position="298"/>
    </location>
</feature>
<feature type="transmembrane region" description="Helical" evidence="2">
    <location>
        <begin position="303"/>
        <end position="323"/>
    </location>
</feature>
<feature type="transmembrane region" description="Helical" evidence="2">
    <location>
        <begin position="338"/>
        <end position="358"/>
    </location>
</feature>
<feature type="transmembrane region" description="Helical" evidence="2">
    <location>
        <begin position="373"/>
        <end position="393"/>
    </location>
</feature>
<feature type="transmembrane region" description="Helical" evidence="2">
    <location>
        <begin position="407"/>
        <end position="427"/>
    </location>
</feature>
<feature type="transmembrane region" description="Helical" evidence="2">
    <location>
        <begin position="455"/>
        <end position="475"/>
    </location>
</feature>
<protein>
    <recommendedName>
        <fullName>Na(+)/H(+) antiporter subunit D1</fullName>
    </recommendedName>
    <alternativeName>
        <fullName>Mnh complex subunit D1</fullName>
    </alternativeName>
</protein>
<comment type="function">
    <text evidence="1">Mnh complex is a Na(+)/H(+) antiporter involved in Na(+) excretion.</text>
</comment>
<comment type="subunit">
    <text evidence="1">May form a heterooligomeric complex that consists of seven subunits: mnhA1, mnhB1, mnhC1, mnhD1, mnhE1, mnhF1 and mnhG1.</text>
</comment>
<comment type="subcellular location">
    <subcellularLocation>
        <location evidence="3">Cell membrane</location>
        <topology evidence="3">Multi-pass membrane protein</topology>
    </subcellularLocation>
</comment>
<comment type="similarity">
    <text evidence="3">Belongs to the CPA3 antiporters (TC 2.A.63) subunit D family.</text>
</comment>
<name>MNHD1_STAAE</name>
<dbReference type="EMBL" id="AP009351">
    <property type="protein sequence ID" value="BAF67091.1"/>
    <property type="molecule type" value="Genomic_DNA"/>
</dbReference>
<dbReference type="RefSeq" id="WP_000573077.1">
    <property type="nucleotide sequence ID" value="NZ_JBBIAE010000002.1"/>
</dbReference>
<dbReference type="SMR" id="A6QFF9"/>
<dbReference type="KEGG" id="sae:NWMN_0819"/>
<dbReference type="HOGENOM" id="CLU_007100_9_2_9"/>
<dbReference type="Proteomes" id="UP000006386">
    <property type="component" value="Chromosome"/>
</dbReference>
<dbReference type="GO" id="GO:0005886">
    <property type="term" value="C:plasma membrane"/>
    <property type="evidence" value="ECO:0007669"/>
    <property type="project" value="UniProtKB-SubCell"/>
</dbReference>
<dbReference type="GO" id="GO:0008137">
    <property type="term" value="F:NADH dehydrogenase (ubiquinone) activity"/>
    <property type="evidence" value="ECO:0007669"/>
    <property type="project" value="InterPro"/>
</dbReference>
<dbReference type="GO" id="GO:0015386">
    <property type="term" value="F:potassium:proton antiporter activity"/>
    <property type="evidence" value="ECO:0007669"/>
    <property type="project" value="InterPro"/>
</dbReference>
<dbReference type="GO" id="GO:0042773">
    <property type="term" value="P:ATP synthesis coupled electron transport"/>
    <property type="evidence" value="ECO:0007669"/>
    <property type="project" value="InterPro"/>
</dbReference>
<dbReference type="GO" id="GO:0006814">
    <property type="term" value="P:sodium ion transport"/>
    <property type="evidence" value="ECO:0007669"/>
    <property type="project" value="UniProtKB-KW"/>
</dbReference>
<dbReference type="InterPro" id="IPR050586">
    <property type="entry name" value="CPA3_Na-H_Antiporter_D"/>
</dbReference>
<dbReference type="InterPro" id="IPR004775">
    <property type="entry name" value="MnhD1"/>
</dbReference>
<dbReference type="InterPro" id="IPR003918">
    <property type="entry name" value="NADH_UbQ_OxRdtase"/>
</dbReference>
<dbReference type="InterPro" id="IPR001750">
    <property type="entry name" value="ND/Mrp_TM"/>
</dbReference>
<dbReference type="NCBIfam" id="TIGR00944">
    <property type="entry name" value="2a6301s04"/>
    <property type="match status" value="1"/>
</dbReference>
<dbReference type="NCBIfam" id="NF005818">
    <property type="entry name" value="PRK07691.1"/>
    <property type="match status" value="1"/>
</dbReference>
<dbReference type="PANTHER" id="PTHR42703:SF1">
    <property type="entry name" value="NA(+)_H(+) ANTIPORTER SUBUNIT D1"/>
    <property type="match status" value="1"/>
</dbReference>
<dbReference type="PANTHER" id="PTHR42703">
    <property type="entry name" value="NADH DEHYDROGENASE"/>
    <property type="match status" value="1"/>
</dbReference>
<dbReference type="Pfam" id="PF00361">
    <property type="entry name" value="Proton_antipo_M"/>
    <property type="match status" value="1"/>
</dbReference>
<dbReference type="PRINTS" id="PR01437">
    <property type="entry name" value="NUOXDRDTASE4"/>
</dbReference>
<proteinExistence type="inferred from homology"/>